<keyword id="KW-0687">Ribonucleoprotein</keyword>
<keyword id="KW-0689">Ribosomal protein</keyword>
<dbReference type="EMBL" id="CP000384">
    <property type="protein sequence ID" value="ABG07135.1"/>
    <property type="molecule type" value="Genomic_DNA"/>
</dbReference>
<dbReference type="SMR" id="Q1BD99"/>
<dbReference type="KEGG" id="mmc:Mmcs_1021"/>
<dbReference type="HOGENOM" id="CLU_158491_3_3_11"/>
<dbReference type="BioCyc" id="MSP164756:G1G6O-1045-MONOMER"/>
<dbReference type="GO" id="GO:0022625">
    <property type="term" value="C:cytosolic large ribosomal subunit"/>
    <property type="evidence" value="ECO:0007669"/>
    <property type="project" value="TreeGrafter"/>
</dbReference>
<dbReference type="GO" id="GO:0003735">
    <property type="term" value="F:structural constituent of ribosome"/>
    <property type="evidence" value="ECO:0007669"/>
    <property type="project" value="InterPro"/>
</dbReference>
<dbReference type="GO" id="GO:0006412">
    <property type="term" value="P:translation"/>
    <property type="evidence" value="ECO:0007669"/>
    <property type="project" value="UniProtKB-UniRule"/>
</dbReference>
<dbReference type="CDD" id="cd00427">
    <property type="entry name" value="Ribosomal_L29_HIP"/>
    <property type="match status" value="1"/>
</dbReference>
<dbReference type="FunFam" id="1.10.287.310:FF:000001">
    <property type="entry name" value="50S ribosomal protein L29"/>
    <property type="match status" value="1"/>
</dbReference>
<dbReference type="Gene3D" id="1.10.287.310">
    <property type="match status" value="1"/>
</dbReference>
<dbReference type="HAMAP" id="MF_00374">
    <property type="entry name" value="Ribosomal_uL29"/>
    <property type="match status" value="1"/>
</dbReference>
<dbReference type="InterPro" id="IPR050063">
    <property type="entry name" value="Ribosomal_protein_uL29"/>
</dbReference>
<dbReference type="InterPro" id="IPR001854">
    <property type="entry name" value="Ribosomal_uL29"/>
</dbReference>
<dbReference type="InterPro" id="IPR018254">
    <property type="entry name" value="Ribosomal_uL29_CS"/>
</dbReference>
<dbReference type="InterPro" id="IPR036049">
    <property type="entry name" value="Ribosomal_uL29_sf"/>
</dbReference>
<dbReference type="NCBIfam" id="TIGR00012">
    <property type="entry name" value="L29"/>
    <property type="match status" value="1"/>
</dbReference>
<dbReference type="PANTHER" id="PTHR10916">
    <property type="entry name" value="60S RIBOSOMAL PROTEIN L35/50S RIBOSOMAL PROTEIN L29"/>
    <property type="match status" value="1"/>
</dbReference>
<dbReference type="PANTHER" id="PTHR10916:SF0">
    <property type="entry name" value="LARGE RIBOSOMAL SUBUNIT PROTEIN UL29C"/>
    <property type="match status" value="1"/>
</dbReference>
<dbReference type="Pfam" id="PF00831">
    <property type="entry name" value="Ribosomal_L29"/>
    <property type="match status" value="1"/>
</dbReference>
<dbReference type="SUPFAM" id="SSF46561">
    <property type="entry name" value="Ribosomal protein L29 (L29p)"/>
    <property type="match status" value="1"/>
</dbReference>
<dbReference type="PROSITE" id="PS00579">
    <property type="entry name" value="RIBOSOMAL_L29"/>
    <property type="match status" value="1"/>
</dbReference>
<name>RL29_MYCSS</name>
<comment type="similarity">
    <text evidence="1">Belongs to the universal ribosomal protein uL29 family.</text>
</comment>
<proteinExistence type="inferred from homology"/>
<organism>
    <name type="scientific">Mycobacterium sp. (strain MCS)</name>
    <dbReference type="NCBI Taxonomy" id="164756"/>
    <lineage>
        <taxon>Bacteria</taxon>
        <taxon>Bacillati</taxon>
        <taxon>Actinomycetota</taxon>
        <taxon>Actinomycetes</taxon>
        <taxon>Mycobacteriales</taxon>
        <taxon>Mycobacteriaceae</taxon>
        <taxon>Mycobacterium</taxon>
    </lineage>
</organism>
<sequence>MAVGVSPGELRELSDDELIERLRESKEELFNLRFQMATGQLSNNRRLRVVRQEIARVYTVLRERELGLASGPAGEES</sequence>
<evidence type="ECO:0000255" key="1">
    <source>
        <dbReference type="HAMAP-Rule" id="MF_00374"/>
    </source>
</evidence>
<evidence type="ECO:0000305" key="2"/>
<reference key="1">
    <citation type="submission" date="2006-06" db="EMBL/GenBank/DDBJ databases">
        <title>Complete sequence of chromosome of Mycobacterium sp. MCS.</title>
        <authorList>
            <consortium name="US DOE Joint Genome Institute"/>
            <person name="Copeland A."/>
            <person name="Lucas S."/>
            <person name="Lapidus A."/>
            <person name="Barry K."/>
            <person name="Detter J.C."/>
            <person name="Glavina del Rio T."/>
            <person name="Hammon N."/>
            <person name="Israni S."/>
            <person name="Dalin E."/>
            <person name="Tice H."/>
            <person name="Pitluck S."/>
            <person name="Martinez M."/>
            <person name="Schmutz J."/>
            <person name="Larimer F."/>
            <person name="Land M."/>
            <person name="Hauser L."/>
            <person name="Kyrpides N."/>
            <person name="Kim E."/>
            <person name="Miller C.D."/>
            <person name="Hughes J.E."/>
            <person name="Anderson A.J."/>
            <person name="Sims R.C."/>
            <person name="Richardson P."/>
        </authorList>
    </citation>
    <scope>NUCLEOTIDE SEQUENCE [LARGE SCALE GENOMIC DNA]</scope>
    <source>
        <strain>MCS</strain>
    </source>
</reference>
<protein>
    <recommendedName>
        <fullName evidence="1">Large ribosomal subunit protein uL29</fullName>
    </recommendedName>
    <alternativeName>
        <fullName evidence="2">50S ribosomal protein L29</fullName>
    </alternativeName>
</protein>
<gene>
    <name evidence="1" type="primary">rpmC</name>
    <name type="ordered locus">Mmcs_1021</name>
</gene>
<accession>Q1BD99</accession>
<feature type="chain" id="PRO_1000007534" description="Large ribosomal subunit protein uL29">
    <location>
        <begin position="1"/>
        <end position="77"/>
    </location>
</feature>